<feature type="chain" id="PRO_1000196834" description="Thiazole synthase">
    <location>
        <begin position="1"/>
        <end position="257"/>
    </location>
</feature>
<feature type="active site" description="Schiff-base intermediate with DXP" evidence="1">
    <location>
        <position position="98"/>
    </location>
</feature>
<feature type="binding site" evidence="1">
    <location>
        <position position="159"/>
    </location>
    <ligand>
        <name>1-deoxy-D-xylulose 5-phosphate</name>
        <dbReference type="ChEBI" id="CHEBI:57792"/>
    </ligand>
</feature>
<feature type="binding site" evidence="1">
    <location>
        <begin position="185"/>
        <end position="186"/>
    </location>
    <ligand>
        <name>1-deoxy-D-xylulose 5-phosphate</name>
        <dbReference type="ChEBI" id="CHEBI:57792"/>
    </ligand>
</feature>
<feature type="binding site" evidence="1">
    <location>
        <begin position="207"/>
        <end position="208"/>
    </location>
    <ligand>
        <name>1-deoxy-D-xylulose 5-phosphate</name>
        <dbReference type="ChEBI" id="CHEBI:57792"/>
    </ligand>
</feature>
<proteinExistence type="inferred from homology"/>
<sequence length="257" mass="26926">MADTWSIGAHAFTSRLLVGTGKYPDFPTMQRALAASGAEVVTVAVRRLDLSKKGEESLLAWIPKGMKLLPNTAACFTAEEAIRTARLGRELEMGDLVKLEVIGDRRTLFPDVEGLIQAAKVLVKEGFTVLPYTNDDPVTAKKLEDAGCAAVMPLGAPIGSGLGLRNPYNLRIIMETVQVPVLVDAGVGTASDAALAMELGAVAVLMNTAIAEAKDPVLMAEAMRAGVEGGRKAFLAGRIPMKLHAAASSPMSGLIGS</sequence>
<organism>
    <name type="scientific">Anaeromyxobacter dehalogenans (strain 2CP-1 / ATCC BAA-258)</name>
    <dbReference type="NCBI Taxonomy" id="455488"/>
    <lineage>
        <taxon>Bacteria</taxon>
        <taxon>Pseudomonadati</taxon>
        <taxon>Myxococcota</taxon>
        <taxon>Myxococcia</taxon>
        <taxon>Myxococcales</taxon>
        <taxon>Cystobacterineae</taxon>
        <taxon>Anaeromyxobacteraceae</taxon>
        <taxon>Anaeromyxobacter</taxon>
    </lineage>
</organism>
<evidence type="ECO:0000255" key="1">
    <source>
        <dbReference type="HAMAP-Rule" id="MF_00443"/>
    </source>
</evidence>
<gene>
    <name evidence="1" type="primary">thiG</name>
    <name type="ordered locus">A2cp1_1433</name>
</gene>
<reference key="1">
    <citation type="submission" date="2009-01" db="EMBL/GenBank/DDBJ databases">
        <title>Complete sequence of Anaeromyxobacter dehalogenans 2CP-1.</title>
        <authorList>
            <person name="Lucas S."/>
            <person name="Copeland A."/>
            <person name="Lapidus A."/>
            <person name="Glavina del Rio T."/>
            <person name="Dalin E."/>
            <person name="Tice H."/>
            <person name="Bruce D."/>
            <person name="Goodwin L."/>
            <person name="Pitluck S."/>
            <person name="Saunders E."/>
            <person name="Brettin T."/>
            <person name="Detter J.C."/>
            <person name="Han C."/>
            <person name="Larimer F."/>
            <person name="Land M."/>
            <person name="Hauser L."/>
            <person name="Kyrpides N."/>
            <person name="Ovchinnikova G."/>
            <person name="Beliaev A.S."/>
            <person name="Richardson P."/>
        </authorList>
    </citation>
    <scope>NUCLEOTIDE SEQUENCE [LARGE SCALE GENOMIC DNA]</scope>
    <source>
        <strain>2CP-1 / ATCC BAA-258</strain>
    </source>
</reference>
<dbReference type="EC" id="2.8.1.10" evidence="1"/>
<dbReference type="EMBL" id="CP001359">
    <property type="protein sequence ID" value="ACL64777.1"/>
    <property type="molecule type" value="Genomic_DNA"/>
</dbReference>
<dbReference type="RefSeq" id="WP_012525390.1">
    <property type="nucleotide sequence ID" value="NC_011891.1"/>
</dbReference>
<dbReference type="SMR" id="B8JH75"/>
<dbReference type="KEGG" id="acp:A2cp1_1433"/>
<dbReference type="HOGENOM" id="CLU_062233_1_0_7"/>
<dbReference type="UniPathway" id="UPA00060"/>
<dbReference type="Proteomes" id="UP000007089">
    <property type="component" value="Chromosome"/>
</dbReference>
<dbReference type="GO" id="GO:0005737">
    <property type="term" value="C:cytoplasm"/>
    <property type="evidence" value="ECO:0007669"/>
    <property type="project" value="UniProtKB-SubCell"/>
</dbReference>
<dbReference type="GO" id="GO:1990107">
    <property type="term" value="F:thiazole synthase activity"/>
    <property type="evidence" value="ECO:0007669"/>
    <property type="project" value="UniProtKB-EC"/>
</dbReference>
<dbReference type="GO" id="GO:0009229">
    <property type="term" value="P:thiamine diphosphate biosynthetic process"/>
    <property type="evidence" value="ECO:0007669"/>
    <property type="project" value="UniProtKB-UniRule"/>
</dbReference>
<dbReference type="CDD" id="cd04728">
    <property type="entry name" value="ThiG"/>
    <property type="match status" value="1"/>
</dbReference>
<dbReference type="Gene3D" id="3.20.20.70">
    <property type="entry name" value="Aldolase class I"/>
    <property type="match status" value="1"/>
</dbReference>
<dbReference type="HAMAP" id="MF_00443">
    <property type="entry name" value="ThiG"/>
    <property type="match status" value="1"/>
</dbReference>
<dbReference type="InterPro" id="IPR013785">
    <property type="entry name" value="Aldolase_TIM"/>
</dbReference>
<dbReference type="InterPro" id="IPR033983">
    <property type="entry name" value="Thiazole_synthase_ThiG"/>
</dbReference>
<dbReference type="InterPro" id="IPR008867">
    <property type="entry name" value="ThiG"/>
</dbReference>
<dbReference type="PANTHER" id="PTHR34266">
    <property type="entry name" value="THIAZOLE SYNTHASE"/>
    <property type="match status" value="1"/>
</dbReference>
<dbReference type="PANTHER" id="PTHR34266:SF2">
    <property type="entry name" value="THIAZOLE SYNTHASE"/>
    <property type="match status" value="1"/>
</dbReference>
<dbReference type="Pfam" id="PF05690">
    <property type="entry name" value="ThiG"/>
    <property type="match status" value="1"/>
</dbReference>
<dbReference type="SUPFAM" id="SSF110399">
    <property type="entry name" value="ThiG-like"/>
    <property type="match status" value="1"/>
</dbReference>
<accession>B8JH75</accession>
<keyword id="KW-0963">Cytoplasm</keyword>
<keyword id="KW-0704">Schiff base</keyword>
<keyword id="KW-0784">Thiamine biosynthesis</keyword>
<keyword id="KW-0808">Transferase</keyword>
<name>THIG_ANAD2</name>
<comment type="function">
    <text evidence="1">Catalyzes the rearrangement of 1-deoxy-D-xylulose 5-phosphate (DXP) to produce the thiazole phosphate moiety of thiamine. Sulfur is provided by the thiocarboxylate moiety of the carrier protein ThiS. In vitro, sulfur can be provided by H(2)S.</text>
</comment>
<comment type="catalytic activity">
    <reaction evidence="1">
        <text>[ThiS sulfur-carrier protein]-C-terminal-Gly-aminoethanethioate + 2-iminoacetate + 1-deoxy-D-xylulose 5-phosphate = [ThiS sulfur-carrier protein]-C-terminal Gly-Gly + 2-[(2R,5Z)-2-carboxy-4-methylthiazol-5(2H)-ylidene]ethyl phosphate + 2 H2O + H(+)</text>
        <dbReference type="Rhea" id="RHEA:26297"/>
        <dbReference type="Rhea" id="RHEA-COMP:12909"/>
        <dbReference type="Rhea" id="RHEA-COMP:19908"/>
        <dbReference type="ChEBI" id="CHEBI:15377"/>
        <dbReference type="ChEBI" id="CHEBI:15378"/>
        <dbReference type="ChEBI" id="CHEBI:57792"/>
        <dbReference type="ChEBI" id="CHEBI:62899"/>
        <dbReference type="ChEBI" id="CHEBI:77846"/>
        <dbReference type="ChEBI" id="CHEBI:90778"/>
        <dbReference type="ChEBI" id="CHEBI:232372"/>
        <dbReference type="EC" id="2.8.1.10"/>
    </reaction>
</comment>
<comment type="pathway">
    <text evidence="1">Cofactor biosynthesis; thiamine diphosphate biosynthesis.</text>
</comment>
<comment type="subunit">
    <text evidence="1">Homotetramer. Forms heterodimers with either ThiH or ThiS.</text>
</comment>
<comment type="subcellular location">
    <subcellularLocation>
        <location evidence="1">Cytoplasm</location>
    </subcellularLocation>
</comment>
<comment type="similarity">
    <text evidence="1">Belongs to the ThiG family.</text>
</comment>
<protein>
    <recommendedName>
        <fullName evidence="1">Thiazole synthase</fullName>
        <ecNumber evidence="1">2.8.1.10</ecNumber>
    </recommendedName>
</protein>